<keyword id="KW-0002">3D-structure</keyword>
<keyword id="KW-0903">Direct protein sequencing</keyword>
<keyword id="KW-1015">Disulfide bond</keyword>
<keyword id="KW-1170">Fusion of virus membrane with host endosomal membrane</keyword>
<keyword id="KW-1168">Fusion of virus membrane with host membrane</keyword>
<keyword id="KW-0325">Glycoprotein</keyword>
<keyword id="KW-1032">Host cell membrane</keyword>
<keyword id="KW-1038">Host endoplasmic reticulum</keyword>
<keyword id="KW-1040">Host Golgi apparatus</keyword>
<keyword id="KW-1043">Host membrane</keyword>
<keyword id="KW-0945">Host-virus interaction</keyword>
<keyword id="KW-0449">Lipoprotein</keyword>
<keyword id="KW-0472">Membrane</keyword>
<keyword id="KW-0479">Metal-binding</keyword>
<keyword id="KW-0519">Myristate</keyword>
<keyword id="KW-1185">Reference proteome</keyword>
<keyword id="KW-0812">Transmembrane</keyword>
<keyword id="KW-1133">Transmembrane helix</keyword>
<keyword id="KW-1161">Viral attachment to host cell</keyword>
<keyword id="KW-0261">Viral envelope protein</keyword>
<keyword id="KW-1162">Viral penetration into host cytoplasm</keyword>
<keyword id="KW-0946">Virion</keyword>
<keyword id="KW-1164">Virus endocytosis by host</keyword>
<keyword id="KW-1160">Virus entry into host cell</keyword>
<keyword id="KW-0862">Zinc</keyword>
<gene>
    <name evidence="2" type="primary">GPC</name>
    <name type="synonym">GP-C</name>
</gene>
<evidence type="ECO:0000250" key="1">
    <source>
        <dbReference type="UniProtKB" id="P26313"/>
    </source>
</evidence>
<evidence type="ECO:0000255" key="2">
    <source>
        <dbReference type="HAMAP-Rule" id="MF_04084"/>
    </source>
</evidence>
<evidence type="ECO:0000269" key="3">
    <source>
    </source>
</evidence>
<evidence type="ECO:0000269" key="4">
    <source>
    </source>
</evidence>
<evidence type="ECO:0000269" key="5">
    <source>
    </source>
</evidence>
<evidence type="ECO:0000269" key="6">
    <source>
    </source>
</evidence>
<evidence type="ECO:0000269" key="7">
    <source>
    </source>
</evidence>
<evidence type="ECO:0000269" key="8">
    <source>
    </source>
</evidence>
<evidence type="ECO:0000269" key="9">
    <source>
    </source>
</evidence>
<evidence type="ECO:0000269" key="10">
    <source>
    </source>
</evidence>
<evidence type="ECO:0000269" key="11">
    <source>
    </source>
</evidence>
<evidence type="ECO:0000269" key="12">
    <source>
    </source>
</evidence>
<evidence type="ECO:0000269" key="13">
    <source>
    </source>
</evidence>
<evidence type="ECO:0000269" key="14">
    <source>
    </source>
</evidence>
<evidence type="ECO:0000269" key="15">
    <source>
    </source>
</evidence>
<evidence type="ECO:0000269" key="16">
    <source>
    </source>
</evidence>
<evidence type="ECO:0000269" key="17">
    <source>
    </source>
</evidence>
<evidence type="ECO:0000269" key="18">
    <source>
    </source>
</evidence>
<evidence type="ECO:0000303" key="19">
    <source>
    </source>
</evidence>
<evidence type="ECO:0000305" key="20">
    <source>
    </source>
</evidence>
<evidence type="ECO:0000305" key="21">
    <source>
    </source>
</evidence>
<evidence type="ECO:0007744" key="22">
    <source>
        <dbReference type="PDB" id="4ZJF"/>
    </source>
</evidence>
<evidence type="ECO:0007744" key="23">
    <source>
        <dbReference type="PDB" id="5FT2"/>
    </source>
</evidence>
<evidence type="ECO:0007744" key="24">
    <source>
        <dbReference type="PDB" id="5OMI"/>
    </source>
</evidence>
<evidence type="ECO:0007744" key="25">
    <source>
        <dbReference type="PDB" id="5VK2"/>
    </source>
</evidence>
<evidence type="ECO:0007744" key="26">
    <source>
        <dbReference type="PDB" id="6JGY"/>
    </source>
</evidence>
<evidence type="ECO:0007744" key="27">
    <source>
        <dbReference type="PDB" id="6P91"/>
    </source>
</evidence>
<evidence type="ECO:0007744" key="28">
    <source>
        <dbReference type="PDB" id="6P95"/>
    </source>
</evidence>
<evidence type="ECO:0007744" key="29">
    <source>
        <dbReference type="PDB" id="7PUY"/>
    </source>
</evidence>
<evidence type="ECO:0007744" key="30">
    <source>
        <dbReference type="PDB" id="7PVD"/>
    </source>
</evidence>
<evidence type="ECO:0007829" key="31">
    <source>
        <dbReference type="PDB" id="4ZJF"/>
    </source>
</evidence>
<evidence type="ECO:0007829" key="32">
    <source>
        <dbReference type="PDB" id="5OMI"/>
    </source>
</evidence>
<evidence type="ECO:0007829" key="33">
    <source>
        <dbReference type="PDB" id="5VK2"/>
    </source>
</evidence>
<evidence type="ECO:0007829" key="34">
    <source>
        <dbReference type="PDB" id="6P95"/>
    </source>
</evidence>
<evidence type="ECO:0007829" key="35">
    <source>
        <dbReference type="PDB" id="7PUY"/>
    </source>
</evidence>
<protein>
    <recommendedName>
        <fullName evidence="2">Pre-glycoprotein polyprotein GP complex</fullName>
        <shortName evidence="2 19">Pre-GP-C</shortName>
    </recommendedName>
    <component>
        <recommendedName>
            <fullName evidence="2">Stable signal peptide</fullName>
            <shortName evidence="2">SSP</shortName>
        </recommendedName>
    </component>
    <component>
        <recommendedName>
            <fullName evidence="2">Glycoprotein G1</fullName>
            <shortName evidence="2">GP1</shortName>
        </recommendedName>
    </component>
    <component>
        <recommendedName>
            <fullName evidence="2">Glycoprotein G2</fullName>
            <shortName evidence="2">GP2</shortName>
        </recommendedName>
    </component>
</protein>
<comment type="function">
    <molecule>Stable signal peptide</molecule>
    <text evidence="2 6 18">Functions as a cleaved signal peptide that is retained as the third component of the GP complex (GP-C) (PubMed:35173332). Helps to stabilize the spike complex in its native conformation (PubMed:35173332). The SSP is required for efficient glycoprotein expression, post-translational maturation cleavage of G1 and G2, glycoprotein transport to the cell surface plasma membrane, formation of infectious virus particles, and acid pH-dependent glycoprotein-mediated cell fusion (PubMed:14555961).</text>
</comment>
<comment type="function">
    <molecule>Glycoprotein G1</molecule>
    <text evidence="2 4 7 8 10 11 12 13 18 20">Forms the virion spikes together with glycoprotein G2 (PubMed:26849049, PubMed:35173332). The glycoprotein spike trimers are connected to the underlying matrix (PubMed:26849049). Interacts with the host receptor. Mediates virus attachment to the host primary receptor alpha-dystroglycan DAG1 (alpha-DG) at the cell surface (PubMed:11967329, PubMed:27147735). This attachment induces virion internalization apparently through macropinocytosis (Probable) (PubMed:27147735). Following endocytosis, there is a pH-dependent switch from binding DAG1 to the host lysosomal receptor LAMP1 (PubMed:24970085, PubMed:27605678, PubMed:28448640). This latter binding triggers the dissociation of GP1, exposing the fusion subunit, GP2, such that fusion can occur (PubMed:24970085). Down-modulates host DAG1 (PubMed:17761532).</text>
</comment>
<comment type="function">
    <molecule>Glycoprotein G2</molecule>
    <text evidence="2 10 15 18">Forms the virion spikes together with glycoprotein G1 (PubMed:26849049, PubMed:35173332). The glycoprotein spike trimers are connected to the underlying matrix (PubMed:26849049). Class I viral fusion protein that directs fusion of viral and host endosomal membranes, leading to delivery of the nucleocapsid into the cytoplasm. Membrane fusion is mediated by irreversible conformational changes induced by acidification (PubMed:31004664).</text>
</comment>
<comment type="subunit">
    <molecule>Stable signal peptide</molecule>
    <text evidence="2 6 18">Interacts with glycoprotein G2 (PubMed:14555961, PubMed:35173332). Part of the GP complex (GP-C) together with glycoprotein G1 and glycoprotein G2 (PubMed:35173332). The GP-complex interacts with protein Z, which interacts with ribonucleocapsid; these interactions may induce virion budding (By similarity).</text>
</comment>
<comment type="subunit">
    <molecule>Glycoprotein G1</molecule>
    <text evidence="2 4 8 9 10 12 13 14 16 17 18">Homotrimer; disulfide-linked (PubMed:28572385, PubMed:31398326, PubMed:31456769, PubMed:35173332). In pre-fusion state, G1 homotrimers bind G2 homotrimers via ionic interactions (PubMed:35173332). Part of the GP complex (GP-C) together with glycoprotein G2 and the stable signal peptide (PubMed:28572385, PubMed:35173332). Interacts with the primary host receptor DAG1 on the cell surface; this interaction occurs at pH 8.0 but not at pH 6.0 and below (PubMed:11967329, PubMed:27605678). Upon virus internalization and at endosomal pH, interacts with the host lysosomal protein LAMP1; this interaction mediates G1 dissociation from GP-C and membrane fusion (PubMed:24970085, PubMed:25972533, PubMed:26849049, PubMed:27605678, PubMed:28448640, PubMed:28572385). The GP-complex interacts with protein Z, which interacts with ribonucleocapsid; these interactions may induce virion budding (By similarity).</text>
</comment>
<comment type="subunit">
    <molecule>Glycoprotein G2</molecule>
    <text evidence="2 6 14 15 16 17 18 21">Homotrimer (PubMed:28572385, PubMed:31004664, PubMed:31398326, PubMed:31456769, PubMed:35173332). Interacts with the stable signal peptide (PubMed:14555961, PubMed:35173332). In pre-fusion state, G2 homotrimers bind G1 homotrimers via ionic interactions (PubMed:35173332). Part of the GP complex (GP-C) together with glycoprotein G1 and the stable signal peptide (Probable) (PubMed:28572385, PubMed:35173332). Acidification in the endosome triggers rearrangements, which ultimately leads to a 6 helix bundle formed by the two heptad repeat domains (HR1 and HR2) in post-fusion state (PubMed:28572385, PubMed:31004664, PubMed:31456769). The GP-complex interacts with protein Z, which interacts with ribonucleocapsid; these interactions may induce virion budding (By similarity).</text>
</comment>
<comment type="interaction">
    <interactant intactId="EBI-8411266">
        <id>P08669</id>
    </interactant>
    <interactant intactId="EBI-2805407">
        <id>P11279</id>
        <label>LAMP1</label>
    </interactant>
    <organismsDiffer>true</organismsDiffer>
    <experiments>4</experiments>
</comment>
<comment type="subcellular location">
    <molecule>Stable signal peptide</molecule>
    <subcellularLocation>
        <location evidence="2">Virion membrane</location>
        <topology evidence="2">Single-pass type II membrane protein</topology>
    </subcellularLocation>
    <subcellularLocation>
        <location evidence="2">Host endoplasmic reticulum membrane</location>
        <topology evidence="2">Single-pass type II membrane protein</topology>
    </subcellularLocation>
    <subcellularLocation>
        <location evidence="2">Host Golgi apparatus membrane</location>
        <topology evidence="2">Single-pass type II membrane protein</topology>
    </subcellularLocation>
    <subcellularLocation>
        <location evidence="2">Host cell membrane</location>
        <topology evidence="2">Single-pass type II membrane protein</topology>
    </subcellularLocation>
</comment>
<comment type="subcellular location">
    <molecule>Glycoprotein G1</molecule>
    <subcellularLocation>
        <location evidence="2">Virion membrane</location>
        <topology evidence="2">Peripheral membrane protein</topology>
    </subcellularLocation>
    <subcellularLocation>
        <location evidence="2">Host endoplasmic reticulum membrane</location>
        <topology evidence="2">Peripheral membrane protein</topology>
    </subcellularLocation>
    <subcellularLocation>
        <location evidence="2">Host Golgi apparatus membrane</location>
        <topology evidence="2">Peripheral membrane protein</topology>
    </subcellularLocation>
    <subcellularLocation>
        <location evidence="2">Host cell membrane</location>
        <topology evidence="2">Peripheral membrane protein</topology>
    </subcellularLocation>
</comment>
<comment type="subcellular location">
    <molecule>Glycoprotein G2</molecule>
    <subcellularLocation>
        <location evidence="2">Virion membrane</location>
        <topology evidence="2">Single-pass membrane protein</topology>
    </subcellularLocation>
    <subcellularLocation>
        <location evidence="2">Host endoplasmic reticulum membrane</location>
        <topology evidence="2">Single-pass membrane protein</topology>
    </subcellularLocation>
    <subcellularLocation>
        <location evidence="2">Host Golgi apparatus membrane</location>
        <topology evidence="2">Single-pass membrane protein</topology>
    </subcellularLocation>
    <subcellularLocation>
        <location evidence="2">Host cell membrane</location>
        <topology evidence="2">Single-pass membrane protein</topology>
    </subcellularLocation>
    <text evidence="2">Binding to the stable signal peptide masks endogenous ER localization signals in the cytoplasmic domain of G2 to ensure that only the fully assembled, tripartite GP complex is transported for virion assembly.</text>
</comment>
<comment type="domain">
    <molecule>Glycoprotein G2</molecule>
    <text evidence="2 17">Contains 1 fusion peptide at the N-terminus, 2 heptad repeats domains HR1 and HR2 and, at the C-terminus, a cytoplasmic domain that plays a role in ER location (PubMed:31456769). Also contains a zinc-binding domain on the cytoplasmic side that allows SSP retention in the GPC complex by accepting a cysteine from SSP as the fourth ligand.</text>
</comment>
<comment type="domain">
    <molecule>Stable signal peptide</molecule>
    <text evidence="2 18">The N-terminus is localized at the extracellular side of the GP-C, with a part embedded in the membrane probably.</text>
</comment>
<comment type="domain">
    <molecule>Glycoprotein G1</molecule>
    <text evidence="2 12">Upon protonation in a weak acidic environment, the histidine triad involved in host LAMP1 binding inhibits pre-mature triggering of the spike, an inhibition that LAMP1 overrides.</text>
</comment>
<comment type="PTM">
    <molecule>Pre-glycoprotein polyprotein GP complex</molecule>
    <text evidence="2 3 6">Specific enzymatic cleavages in vivo yield mature proteins (PubMed:11606739, PubMed:14555961). GP-C polyprotein is cleaved in the endoplasmic reticulum by the host protease MBTPS1 (PubMed:11606739). Only cleaved glycoprotein is incorporated into virions.</text>
</comment>
<comment type="PTM">
    <molecule>Stable signal peptide</molecule>
    <text evidence="2 18">The SSP remains stably associated with the GP complex following cleavage by signal peptidase and plays crucial roles in the trafficking of GP through the secretory pathway(PubMed:35173332).</text>
</comment>
<comment type="PTM">
    <molecule>Stable signal peptide</molecule>
    <text evidence="2">Myristoylation is necessary for GP2-mediated fusion activity.</text>
</comment>
<comment type="similarity">
    <text evidence="2">Belongs to the arenaviridae GPC protein family.</text>
</comment>
<name>GLYC_LASSJ</name>
<accession>P08669</accession>
<feature type="initiator methionine" description="Removed; by host" evidence="2">
    <location>
        <position position="1"/>
    </location>
</feature>
<feature type="chain" id="PRO_0000353854" description="Pre-glycoprotein polyprotein GP complex" evidence="2">
    <location>
        <begin position="2"/>
        <end position="491"/>
    </location>
</feature>
<feature type="chain" id="PRO_0000353855" description="Stable signal peptide" evidence="2">
    <location>
        <begin position="2"/>
        <end position="58"/>
    </location>
</feature>
<feature type="chain" id="PRO_0000036601" description="Glycoprotein G1" evidence="2">
    <location>
        <begin position="59"/>
        <end position="259"/>
    </location>
</feature>
<feature type="chain" id="PRO_0000036602" description="Glycoprotein G2" evidence="2">
    <location>
        <begin position="260"/>
        <end position="491"/>
    </location>
</feature>
<feature type="topological domain" description="Extracellular" evidence="2 18">
    <location>
        <begin position="2"/>
        <end position="17"/>
    </location>
</feature>
<feature type="transmembrane region" description="Helical" evidence="2 18">
    <location>
        <begin position="18"/>
        <end position="33"/>
    </location>
</feature>
<feature type="topological domain" description="Cytoplasmic" evidence="2 18">
    <location>
        <begin position="34"/>
        <end position="58"/>
    </location>
</feature>
<feature type="topological domain" description="Extracellular" evidence="2">
    <location>
        <begin position="59"/>
        <end position="432"/>
    </location>
</feature>
<feature type="transmembrane region" description="Helical" evidence="2">
    <location>
        <begin position="433"/>
        <end position="453"/>
    </location>
</feature>
<feature type="topological domain" description="Cytoplasmic" evidence="2">
    <location>
        <begin position="454"/>
        <end position="491"/>
    </location>
</feature>
<feature type="binding site" evidence="2">
    <location>
        <position position="57"/>
    </location>
    <ligand>
        <name>Zn(2+)</name>
        <dbReference type="ChEBI" id="CHEBI:29105"/>
        <label>1</label>
    </ligand>
</feature>
<feature type="binding site" evidence="2">
    <location>
        <position position="455"/>
    </location>
    <ligand>
        <name>Zn(2+)</name>
        <dbReference type="ChEBI" id="CHEBI:29105"/>
        <label>2</label>
    </ligand>
</feature>
<feature type="binding site" evidence="2">
    <location>
        <position position="457"/>
    </location>
    <ligand>
        <name>Zn(2+)</name>
        <dbReference type="ChEBI" id="CHEBI:29105"/>
        <label>2</label>
    </ligand>
</feature>
<feature type="binding site" evidence="2">
    <location>
        <position position="463"/>
    </location>
    <ligand>
        <name>Zn(2+)</name>
        <dbReference type="ChEBI" id="CHEBI:29105"/>
        <label>2</label>
    </ligand>
</feature>
<feature type="binding site" evidence="2">
    <location>
        <position position="467"/>
    </location>
    <ligand>
        <name>Zn(2+)</name>
        <dbReference type="ChEBI" id="CHEBI:29105"/>
        <label>1</label>
    </ligand>
</feature>
<feature type="binding site" evidence="2">
    <location>
        <position position="475"/>
    </location>
    <ligand>
        <name>Zn(2+)</name>
        <dbReference type="ChEBI" id="CHEBI:29105"/>
        <label>1</label>
    </ligand>
</feature>
<feature type="binding site" evidence="2">
    <location>
        <position position="477"/>
    </location>
    <ligand>
        <name>Zn(2+)</name>
        <dbReference type="ChEBI" id="CHEBI:29105"/>
        <label>1</label>
    </ligand>
</feature>
<feature type="site" description="Important for GP-C-mediated membrane fusion" evidence="1">
    <location>
        <position position="33"/>
    </location>
</feature>
<feature type="site" description="Cleavage; by host signal peptidase" evidence="2">
    <location>
        <begin position="58"/>
        <end position="59"/>
    </location>
</feature>
<feature type="site" description="Cleavage; by host MBTPS1" evidence="2">
    <location>
        <begin position="259"/>
        <end position="260"/>
    </location>
</feature>
<feature type="lipid moiety-binding region" description="N-myristoyl glycine; by host" evidence="2">
    <location>
        <position position="2"/>
    </location>
</feature>
<feature type="glycosylation site" description="N-linked (GlcNAc...) asparagine; by host" evidence="2 14">
    <location>
        <position position="79"/>
    </location>
</feature>
<feature type="glycosylation site" description="N-linked (GlcNAc...) asparagine; by host" evidence="2 14">
    <location>
        <position position="89"/>
    </location>
</feature>
<feature type="glycosylation site" description="N-linked (GlcNAc...) asparagine; by host" evidence="2 14">
    <location>
        <position position="99"/>
    </location>
</feature>
<feature type="glycosylation site" description="N-linked (GlcNAc...) asparagine; by host" evidence="2 9 10 14">
    <location>
        <position position="109"/>
    </location>
</feature>
<feature type="glycosylation site" description="N-linked (GlcNAc...) asparagine; by host" evidence="2 9 10 14">
    <location>
        <position position="119"/>
    </location>
</feature>
<feature type="glycosylation site" description="N-linked (GlcNAc...) asparagine; by host" evidence="2 9 10 14">
    <location>
        <position position="167"/>
    </location>
</feature>
<feature type="glycosylation site" description="N-linked (GlcNAc...) asparagine; by host" evidence="2 9 10 14">
    <location>
        <position position="224"/>
    </location>
</feature>
<feature type="glycosylation site" description="N-linked (GlcNAc...) asparagine; by host" evidence="2 14">
    <location>
        <position position="365"/>
    </location>
</feature>
<feature type="glycosylation site" description="N-linked (GlcNAc...) asparagine; by host" evidence="2 14">
    <location>
        <position position="373"/>
    </location>
</feature>
<feature type="glycosylation site" description="N-linked (GlcNAc...) asparagine; by host" evidence="2 14">
    <location>
        <position position="390"/>
    </location>
</feature>
<feature type="glycosylation site" description="N-linked (GlcNAc...) asparagine; by host" evidence="2 14">
    <location>
        <position position="395"/>
    </location>
</feature>
<feature type="disulfide bond" evidence="2 9 10 14">
    <location>
        <begin position="86"/>
        <end position="231"/>
    </location>
</feature>
<feature type="disulfide bond" evidence="2 9 10 14">
    <location>
        <begin position="118"/>
        <end position="155"/>
    </location>
</feature>
<feature type="disulfide bond" evidence="2 9 10 14">
    <location>
        <begin position="180"/>
        <end position="212"/>
    </location>
</feature>
<feature type="disulfide bond" evidence="2">
    <location>
        <begin position="279"/>
        <end position="292"/>
    </location>
</feature>
<feature type="disulfide bond" evidence="2">
    <location>
        <begin position="301"/>
        <end position="310"/>
    </location>
</feature>
<feature type="disulfide bond" evidence="2 15">
    <location>
        <begin position="364"/>
        <end position="385"/>
    </location>
</feature>
<feature type="mutagenesis site" description="No effect on SSP cleavage." evidence="5">
    <original>G</original>
    <variation>A</variation>
    <location>
        <position position="54"/>
    </location>
</feature>
<feature type="mutagenesis site" description="Complete loss of SSP cleavage." evidence="5">
    <original>S</original>
    <variation>A</variation>
    <location>
        <position position="56"/>
    </location>
</feature>
<feature type="mutagenesis site" description="Complete loss of SSP cleavage." evidence="5">
    <original>T</original>
    <variation>A</variation>
    <location>
        <position position="58"/>
    </location>
</feature>
<feature type="mutagenesis site" description="No effect on SSP cleavage." evidence="5">
    <original>S</original>
    <variation>A</variation>
    <location>
        <position position="60"/>
    </location>
</feature>
<feature type="helix" evidence="35">
    <location>
        <begin position="4"/>
        <end position="10"/>
    </location>
</feature>
<feature type="helix" evidence="35">
    <location>
        <begin position="15"/>
        <end position="34"/>
    </location>
</feature>
<feature type="turn" evidence="33">
    <location>
        <begin position="63"/>
        <end position="65"/>
    </location>
</feature>
<feature type="strand" evidence="33">
    <location>
        <begin position="66"/>
        <end position="73"/>
    </location>
</feature>
<feature type="helix" evidence="33">
    <location>
        <begin position="75"/>
        <end position="78"/>
    </location>
</feature>
<feature type="turn" evidence="33">
    <location>
        <begin position="79"/>
        <end position="81"/>
    </location>
</feature>
<feature type="strand" evidence="31">
    <location>
        <begin position="84"/>
        <end position="86"/>
    </location>
</feature>
<feature type="strand" evidence="31">
    <location>
        <begin position="91"/>
        <end position="95"/>
    </location>
</feature>
<feature type="strand" evidence="31">
    <location>
        <begin position="98"/>
        <end position="109"/>
    </location>
</feature>
<feature type="helix" evidence="31">
    <location>
        <begin position="123"/>
        <end position="139"/>
    </location>
</feature>
<feature type="strand" evidence="31">
    <location>
        <begin position="152"/>
        <end position="158"/>
    </location>
</feature>
<feature type="strand" evidence="31">
    <location>
        <begin position="161"/>
        <end position="167"/>
    </location>
</feature>
<feature type="helix" evidence="31">
    <location>
        <begin position="173"/>
        <end position="178"/>
    </location>
</feature>
<feature type="helix" evidence="31">
    <location>
        <begin position="183"/>
        <end position="194"/>
    </location>
</feature>
<feature type="turn" evidence="34">
    <location>
        <begin position="195"/>
        <end position="198"/>
    </location>
</feature>
<feature type="strand" evidence="31">
    <location>
        <begin position="201"/>
        <end position="204"/>
    </location>
</feature>
<feature type="strand" evidence="31">
    <location>
        <begin position="211"/>
        <end position="214"/>
    </location>
</feature>
<feature type="strand" evidence="31">
    <location>
        <begin position="219"/>
        <end position="226"/>
    </location>
</feature>
<feature type="turn" evidence="31">
    <location>
        <begin position="227"/>
        <end position="231"/>
    </location>
</feature>
<feature type="strand" evidence="34">
    <location>
        <begin position="233"/>
        <end position="238"/>
    </location>
</feature>
<feature type="helix" evidence="33">
    <location>
        <begin position="239"/>
        <end position="246"/>
    </location>
</feature>
<feature type="strand" evidence="33">
    <location>
        <begin position="248"/>
        <end position="251"/>
    </location>
</feature>
<feature type="strand" evidence="35">
    <location>
        <begin position="275"/>
        <end position="277"/>
    </location>
</feature>
<feature type="strand" evidence="33">
    <location>
        <begin position="278"/>
        <end position="280"/>
    </location>
</feature>
<feature type="turn" evidence="33">
    <location>
        <begin position="282"/>
        <end position="284"/>
    </location>
</feature>
<feature type="strand" evidence="34">
    <location>
        <begin position="285"/>
        <end position="288"/>
    </location>
</feature>
<feature type="strand" evidence="33">
    <location>
        <begin position="291"/>
        <end position="293"/>
    </location>
</feature>
<feature type="helix" evidence="33">
    <location>
        <begin position="295"/>
        <end position="298"/>
    </location>
</feature>
<feature type="helix" evidence="33">
    <location>
        <begin position="300"/>
        <end position="303"/>
    </location>
</feature>
<feature type="helix" evidence="32">
    <location>
        <begin position="306"/>
        <end position="354"/>
    </location>
</feature>
<feature type="helix" evidence="32">
    <location>
        <begin position="356"/>
        <end position="358"/>
    </location>
</feature>
<feature type="helix" evidence="32">
    <location>
        <begin position="368"/>
        <end position="373"/>
    </location>
</feature>
<feature type="turn" evidence="33">
    <location>
        <begin position="375"/>
        <end position="377"/>
    </location>
</feature>
<feature type="strand" evidence="35">
    <location>
        <begin position="384"/>
        <end position="389"/>
    </location>
</feature>
<feature type="helix" evidence="32">
    <location>
        <begin position="390"/>
        <end position="392"/>
    </location>
</feature>
<feature type="helix" evidence="33">
    <location>
        <begin position="396"/>
        <end position="398"/>
    </location>
</feature>
<feature type="helix" evidence="32">
    <location>
        <begin position="402"/>
        <end position="417"/>
    </location>
</feature>
<feature type="helix" evidence="35">
    <location>
        <begin position="428"/>
        <end position="447"/>
    </location>
</feature>
<dbReference type="EMBL" id="M15076">
    <property type="protein sequence ID" value="AAA46283.1"/>
    <property type="molecule type" value="Genomic_RNA"/>
</dbReference>
<dbReference type="EMBL" id="J04324">
    <property type="protein sequence ID" value="AAA46286.1"/>
    <property type="molecule type" value="Genomic_RNA"/>
</dbReference>
<dbReference type="PIR" id="A24296">
    <property type="entry name" value="VGXPLV"/>
</dbReference>
<dbReference type="RefSeq" id="NP_694870.1">
    <property type="nucleotide sequence ID" value="NC_004296.1"/>
</dbReference>
<dbReference type="PDB" id="4ZJF">
    <property type="method" value="X-ray"/>
    <property type="resolution" value="2.60 A"/>
    <property type="chains" value="A/B/C/D=75-237"/>
</dbReference>
<dbReference type="PDB" id="5FT2">
    <property type="method" value="EM"/>
    <property type="resolution" value="16.40 A"/>
    <property type="chains" value="B=75-237"/>
</dbReference>
<dbReference type="PDB" id="5OMI">
    <property type="method" value="X-ray"/>
    <property type="resolution" value="2.56 A"/>
    <property type="chains" value="A/B/C=306-419"/>
</dbReference>
<dbReference type="PDB" id="5VK2">
    <property type="method" value="X-ray"/>
    <property type="resolution" value="3.20 A"/>
    <property type="chains" value="A/B/C=1-259, a/b/c=260-423"/>
</dbReference>
<dbReference type="PDB" id="6JGY">
    <property type="method" value="X-ray"/>
    <property type="resolution" value="3.39 A"/>
    <property type="chains" value="A=306-432"/>
</dbReference>
<dbReference type="PDB" id="6P91">
    <property type="method" value="X-ray"/>
    <property type="resolution" value="4.00 A"/>
    <property type="chains" value="A=1-257, a=260-424"/>
</dbReference>
<dbReference type="PDB" id="6P95">
    <property type="method" value="X-ray"/>
    <property type="resolution" value="3.50 A"/>
    <property type="chains" value="A/B/C=1-259, a/b/c=260-433"/>
</dbReference>
<dbReference type="PDB" id="7PUY">
    <property type="method" value="EM"/>
    <property type="resolution" value="3.30 A"/>
    <property type="chains" value="A/B/C=1-259, a/b/c=260-491"/>
</dbReference>
<dbReference type="PDB" id="7PVD">
    <property type="method" value="EM"/>
    <property type="resolution" value="3.70 A"/>
    <property type="chains" value="A/B/C=1-259, a/b/c=260-491"/>
</dbReference>
<dbReference type="PDB" id="7SGD">
    <property type="method" value="EM"/>
    <property type="resolution" value="3.97 A"/>
    <property type="chains" value="A/B/C/a/b/c=1-424"/>
</dbReference>
<dbReference type="PDB" id="7SGF">
    <property type="method" value="EM"/>
    <property type="resolution" value="4.41 A"/>
    <property type="chains" value="A/B/C/a/b/c=1-424"/>
</dbReference>
<dbReference type="PDBsum" id="4ZJF"/>
<dbReference type="PDBsum" id="5FT2"/>
<dbReference type="PDBsum" id="5OMI"/>
<dbReference type="PDBsum" id="5VK2"/>
<dbReference type="PDBsum" id="6JGY"/>
<dbReference type="PDBsum" id="6P91"/>
<dbReference type="PDBsum" id="6P95"/>
<dbReference type="PDBsum" id="7PUY"/>
<dbReference type="PDBsum" id="7PVD"/>
<dbReference type="PDBsum" id="7SGD"/>
<dbReference type="PDBsum" id="7SGF"/>
<dbReference type="EMDB" id="EMD-13662"/>
<dbReference type="EMDB" id="EMD-13667"/>
<dbReference type="EMDB" id="EMD-26195"/>
<dbReference type="EMDB" id="EMD-26653"/>
<dbReference type="EMDB" id="EMD-26655"/>
<dbReference type="EMDB" id="EMD-26740"/>
<dbReference type="EMDB" id="EMD-26859"/>
<dbReference type="EMDB" id="EMD-28178"/>
<dbReference type="EMDB" id="EMD-28182"/>
<dbReference type="EMDB" id="EMD-28183"/>
<dbReference type="EMDB" id="EMD-41048"/>
<dbReference type="EMDB" id="EMD-41713"/>
<dbReference type="EMDB" id="EMD-41715"/>
<dbReference type="EMDB" id="EMD-43141"/>
<dbReference type="EMDB" id="EMD-43168"/>
<dbReference type="EMDB" id="EMD-45624"/>
<dbReference type="EMDB" id="EMD-45625"/>
<dbReference type="EMDB" id="EMD-45643"/>
<dbReference type="EMDB" id="EMD-45644"/>
<dbReference type="SMR" id="P08669"/>
<dbReference type="IntAct" id="P08669">
    <property type="interactions" value="5"/>
</dbReference>
<dbReference type="MINT" id="P08669"/>
<dbReference type="GlyCosmos" id="P08669">
    <property type="glycosylation" value="11 sites, No reported glycans"/>
</dbReference>
<dbReference type="iPTMnet" id="P08669"/>
<dbReference type="KEGG" id="vg:956585"/>
<dbReference type="EvolutionaryTrace" id="P08669"/>
<dbReference type="Proteomes" id="UP000002473">
    <property type="component" value="Genome"/>
</dbReference>
<dbReference type="GO" id="GO:0044167">
    <property type="term" value="C:host cell endoplasmic reticulum membrane"/>
    <property type="evidence" value="ECO:0007669"/>
    <property type="project" value="UniProtKB-SubCell"/>
</dbReference>
<dbReference type="GO" id="GO:0044178">
    <property type="term" value="C:host cell Golgi membrane"/>
    <property type="evidence" value="ECO:0007669"/>
    <property type="project" value="UniProtKB-SubCell"/>
</dbReference>
<dbReference type="GO" id="GO:0020002">
    <property type="term" value="C:host cell plasma membrane"/>
    <property type="evidence" value="ECO:0007669"/>
    <property type="project" value="UniProtKB-SubCell"/>
</dbReference>
<dbReference type="GO" id="GO:0016020">
    <property type="term" value="C:membrane"/>
    <property type="evidence" value="ECO:0007669"/>
    <property type="project" value="UniProtKB-UniRule"/>
</dbReference>
<dbReference type="GO" id="GO:0019031">
    <property type="term" value="C:viral envelope"/>
    <property type="evidence" value="ECO:0007669"/>
    <property type="project" value="UniProtKB-UniRule"/>
</dbReference>
<dbReference type="GO" id="GO:0055036">
    <property type="term" value="C:virion membrane"/>
    <property type="evidence" value="ECO:0007669"/>
    <property type="project" value="UniProtKB-SubCell"/>
</dbReference>
<dbReference type="GO" id="GO:0046872">
    <property type="term" value="F:metal ion binding"/>
    <property type="evidence" value="ECO:0007669"/>
    <property type="project" value="UniProtKB-KW"/>
</dbReference>
<dbReference type="GO" id="GO:0039654">
    <property type="term" value="P:fusion of virus membrane with host endosome membrane"/>
    <property type="evidence" value="ECO:0007669"/>
    <property type="project" value="UniProtKB-UniRule"/>
</dbReference>
<dbReference type="GO" id="GO:0019065">
    <property type="term" value="P:receptor-mediated endocytosis of virus by host cell"/>
    <property type="evidence" value="ECO:0007669"/>
    <property type="project" value="UniProtKB-UniRule"/>
</dbReference>
<dbReference type="GO" id="GO:0019062">
    <property type="term" value="P:virion attachment to host cell"/>
    <property type="evidence" value="ECO:0007669"/>
    <property type="project" value="UniProtKB-UniRule"/>
</dbReference>
<dbReference type="Gene3D" id="6.10.140.1590">
    <property type="match status" value="1"/>
</dbReference>
<dbReference type="Gene3D" id="2.20.28.180">
    <property type="entry name" value="Arenavirus glycoprotein, zinc binding domain"/>
    <property type="match status" value="1"/>
</dbReference>
<dbReference type="HAMAP" id="MF_04084">
    <property type="entry name" value="ARENA_GPC"/>
    <property type="match status" value="1"/>
</dbReference>
<dbReference type="InterPro" id="IPR001535">
    <property type="entry name" value="Arena_glycoprot"/>
</dbReference>
<dbReference type="InterPro" id="IPR043015">
    <property type="entry name" value="Arena_glycoprot_zinc-bd"/>
</dbReference>
<dbReference type="Pfam" id="PF00798">
    <property type="entry name" value="Arena_glycoprot"/>
    <property type="match status" value="1"/>
</dbReference>
<dbReference type="PIRSF" id="PIRSF004028">
    <property type="entry name" value="GPC_ArenaV"/>
    <property type="match status" value="1"/>
</dbReference>
<reference key="1">
    <citation type="journal article" date="1989" name="Virology">
        <title>Nucleotide sequence of the Lassa virus (Josiah strain) S genome RNA and amino acid sequence comparison of the N and GPC proteins to other arenaviruses.</title>
        <authorList>
            <person name="Auperin D.D."/>
            <person name="McCormick J.B."/>
        </authorList>
    </citation>
    <scope>NUCLEOTIDE SEQUENCE [GENOMIC RNA]</scope>
</reference>
<reference key="2">
    <citation type="journal article" date="1986" name="Virology">
        <title>Nucleotide sequence of the glycoprotein gene and intergenic region of the Lassa virus S genome RNA.</title>
        <authorList>
            <person name="Auperin D.D."/>
            <person name="Sasso D.R."/>
            <person name="McCormick J.B."/>
        </authorList>
    </citation>
    <scope>NUCLEOTIDE SEQUENCE [GENOMIC RNA]</scope>
</reference>
<reference key="3">
    <citation type="journal article" date="2003" name="FEBS Lett.">
        <title>Signal peptide of Lassa virus glycoprotein GP-C exhibits an unusual length.</title>
        <authorList>
            <person name="Eichler R."/>
            <person name="Lenz O."/>
            <person name="Strecker T."/>
            <person name="Garten W."/>
        </authorList>
    </citation>
    <scope>PROTEIN SEQUENCE OF 59-65</scope>
    <scope>MUTAGENESIS OF GLY-54; SER-56; THR-58 AND SER-60</scope>
</reference>
<reference key="4">
    <citation type="journal article" date="2001" name="Proc. Natl. Acad. Sci. U.S.A.">
        <title>The Lassa virus glycoprotein precursor GP-C is proteolytically processed by subtilase SKI-1/S1P.</title>
        <authorList>
            <person name="Lenz O."/>
            <person name="ter Meulen J."/>
            <person name="Klenk H.D."/>
            <person name="Seidah N.G."/>
            <person name="Garten W."/>
        </authorList>
    </citation>
    <scope>PROTEOLYTIC PROCESSING (PRE-GLYCOPROTEIN POLYPROTEIN GP COMPLEX)</scope>
</reference>
<reference key="5">
    <citation type="journal article" date="2002" name="J. Virol.">
        <title>New World arenavirus clade C, but not clade A and B viruses, utilizes alpha-dystroglycan as its major receptor.</title>
        <authorList>
            <person name="Spiropoulou C.F."/>
            <person name="Kunz S."/>
            <person name="Rollin P.E."/>
            <person name="Campbell K.P."/>
            <person name="Oldstone M.B."/>
        </authorList>
    </citation>
    <scope>FUNCTION (GLYCOPROTEIN G1)</scope>
    <scope>INTERACTION WITH HOST DAG1 (GLYCOPROTEIN G1)</scope>
</reference>
<reference key="6">
    <citation type="journal article" date="2003" name="EMBO Rep.">
        <title>Identification of Lassa virus glycoprotein signal peptide as a trans-acting maturation factor.</title>
        <authorList>
            <person name="Eichler R."/>
            <person name="Lenz O."/>
            <person name="Strecker T."/>
            <person name="Eickmann M."/>
            <person name="Klenk H.D."/>
            <person name="Garten W."/>
        </authorList>
    </citation>
    <scope>FUNCTION (STABLE SIGNAL PEPTIDE)</scope>
    <scope>INTERACTION WITH GLYCOPROTEIN G2 (STABLE SIGNAL PEPTIDE)</scope>
    <scope>PROTEOLYTIC PROCESSING (PRE-GLYCOPROTEIN POLYPROTEIN GP COMPLEX)</scope>
    <scope>INTERACTION WITH STABLE SIGNAL PEPTIDE (GLYCOPROTEIN G2)</scope>
</reference>
<reference key="7">
    <citation type="journal article" date="2007" name="Mol. Biol. Cell">
        <title>Old World arenavirus infection interferes with the expression of functional alpha-dystroglycan in the host cell.</title>
        <authorList>
            <person name="Rojek J.M."/>
            <person name="Campbell K.P."/>
            <person name="Oldstone M.B."/>
            <person name="Kunz S."/>
        </authorList>
    </citation>
    <scope>FUNCTION (GLYCOPROTEIN G1)</scope>
</reference>
<reference key="8">
    <citation type="journal article" date="2014" name="Science">
        <title>Virus entry. Lassa virus entry requires a trigger-induced receptor switch.</title>
        <authorList>
            <person name="Jae L.T."/>
            <person name="Raaben M."/>
            <person name="Herbert A.S."/>
            <person name="Kuehne A.I."/>
            <person name="Wirchnianski A.S."/>
            <person name="Soh T.K."/>
            <person name="Stubbs S.H."/>
            <person name="Janssen H."/>
            <person name="Damme M."/>
            <person name="Saftig P."/>
            <person name="Whelan S.P."/>
            <person name="Dye J.M."/>
            <person name="Brummelkamp T.R."/>
        </authorList>
    </citation>
    <scope>FUNCTION (GLYCOPROTEIN G1)</scope>
    <scope>INTERACTION WITH HOST LAMP1 (GLYCOPROTEIN G1)</scope>
</reference>
<reference key="9">
    <citation type="journal article" date="2016" name="J. Virol.">
        <title>Role of LAMP1 Binding and pH Sensing by the Spike Complex of Lassa Virus.</title>
        <authorList>
            <person name="Cohen-Dvashi H."/>
            <person name="Israeli H."/>
            <person name="Shani O."/>
            <person name="Katz A."/>
            <person name="Diskin R."/>
        </authorList>
    </citation>
    <scope>FUNCTION (GLYCOPROTEIN G1)</scope>
    <scope>INTERACTION WITH HOST LAMP1 (GLYCOPROTEIN G1)</scope>
    <scope>INTERACTION WITH HOST DAG1 (GLYCOPROTEIN G1)</scope>
    <scope>DOMAIN (GLYCOPROTEIN G1)</scope>
</reference>
<reference key="10">
    <citation type="journal article" date="2016" name="J. Virol.">
        <title>Lassa Virus Cell Entry via Dystroglycan Involves an Unusual Pathway of Macropinocytosis.</title>
        <authorList>
            <person name="Oppliger J."/>
            <person name="Torriani G."/>
            <person name="Herrador A."/>
            <person name="Kunz S."/>
        </authorList>
    </citation>
    <scope>FUNCTION (GLYCOPROTEIN G1)</scope>
</reference>
<reference key="11">
    <citation type="journal article" date="2017" name="PLoS Pathog.">
        <title>Mapping of the Lassa virus LAMP1 binding site reveals unique determinants not shared by other old world arenaviruses.</title>
        <authorList>
            <person name="Israeli H."/>
            <person name="Cohen-Dvashi H."/>
            <person name="Shulman A."/>
            <person name="Shimon A."/>
            <person name="Diskin R."/>
        </authorList>
    </citation>
    <scope>INTERACTION WITH HOST LAMP1 (GLYCOPROTEIN G1)</scope>
    <scope>FUNCTION (GLYCOPROTEIN G1)</scope>
    <scope>MUTAGENESIS OF LEU-188; MET-192; ALA-195; GLY-197; TYR-200; ASP-204 AND SER-216</scope>
</reference>
<reference key="12">
    <citation type="journal article" date="2022" name="Biosci. Rep.">
        <title>Lassa virus glycoprotein complex review: insights into its unique fusion machinery.</title>
        <authorList>
            <person name="Pennington H.N."/>
            <person name="Lee J."/>
        </authorList>
    </citation>
    <scope>REVIEW</scope>
</reference>
<reference evidence="22" key="13">
    <citation type="journal article" date="2015" name="J. Virol.">
        <title>Molecular Mechanism for LAMP1 Recognition by Lassa Virus.</title>
        <authorList>
            <person name="Cohen-Dvashi H."/>
            <person name="Cohen N."/>
            <person name="Israeli H."/>
            <person name="Diskin R."/>
        </authorList>
    </citation>
    <scope>X-RAY CRYSTALLOGRAPHY (2.60 ANGSTROMS) OF 75-237</scope>
    <scope>INTERACTION WITH HOST LAMP1 (GLYCOPROTEIN G1)</scope>
    <scope>GLYCOSYLATION AT ASN-109; ASN-119; ASN-167 AND ASN-224</scope>
    <scope>DISULFIDE BONDS</scope>
    <scope>MUTAGENESIS OF HIS-92; HIS-93 AND HIS-230</scope>
</reference>
<reference key="14">
    <citation type="journal article" date="2024" name="Viruses">
        <title>Cellular N-Myristoyl Transferases Are Required for Mammarenavirus Multiplication.</title>
        <authorList>
            <person name="Witwit H."/>
            <person name="Betancourt C.A."/>
            <person name="Cubitt B."/>
            <person name="Khafaji R."/>
            <person name="Kowalski H."/>
            <person name="Jackson N."/>
            <person name="Ye C."/>
            <person name="Martinez-Sobrido L."/>
            <person name="de la Torre J.C."/>
        </authorList>
    </citation>
    <scope>MYRISTOYLATION (STABLE SIGNAL PEPTIDE)</scope>
    <source>
        <strain>Candid vaccine</strain>
    </source>
</reference>
<reference evidence="23" key="15">
    <citation type="journal article" date="2016" name="PLoS Pathog.">
        <title>Acidic pH-Induced Conformations and LAMP1 Binding of the Lassa Virus Glycoprotein Spike.</title>
        <authorList>
            <person name="Li S."/>
            <person name="Sun Z."/>
            <person name="Pryce R."/>
            <person name="Parsy M.L."/>
            <person name="Fehling S.K."/>
            <person name="Schlie K."/>
            <person name="Siebert C.A."/>
            <person name="Garten W."/>
            <person name="Bowden T.A."/>
            <person name="Strecker T."/>
            <person name="Huiskonen J.T."/>
        </authorList>
    </citation>
    <scope>STRUCTURE BY ELECTRON MICROSCOPY (16.40 ANGSTROMS) OF 75-237</scope>
    <scope>FUNCTION (GLYCOPROTEIN G1)</scope>
    <scope>FUNCTION (GLYCOPROTEIN G2)</scope>
    <scope>DISULFIDE BONDS</scope>
    <scope>GLYCOSYLATION AT ASN-109; ASN-119; ASN-167 AND ASN-224</scope>
</reference>
<reference evidence="25" key="16">
    <citation type="journal article" date="2017" name="Science">
        <title>Structural basis for antibody-mediated neutralization of Lassa virus.</title>
        <authorList>
            <person name="Hastie K.M."/>
            <person name="Zandonatti M.A."/>
            <person name="Kleinfelter L.M."/>
            <person name="Heinrich M.L."/>
            <person name="Rowland M.M."/>
            <person name="Chandran K."/>
            <person name="Branco L.M."/>
            <person name="Robinson J.E."/>
            <person name="Garry R.F."/>
            <person name="Saphire E.O."/>
        </authorList>
    </citation>
    <scope>X-RAY CRYSTALLOGRAPHY (3.20 ANGSTROMS) OF 1-259</scope>
    <scope>GLYCOSYLATION AT ASN-79; ASN-89; ASN-99; ASN-109; ASN-119; ASN-167; ASN-224; ASN-365; ASN-373; ASN-390 AND ASN-395</scope>
    <scope>SUBUNIT (GLYCOPROTEIN G1)</scope>
    <scope>SUBUNIT (GLYCOPROTEIN G2)</scope>
    <scope>DISULFIDE BONDS</scope>
</reference>
<reference evidence="27 28" key="17">
    <citation type="journal article" date="2019" name="Cell">
        <title>Convergent Structures Illuminate Features for Germline Antibody Binding and Pan-Lassa Virus Neutralization.</title>
        <authorList>
            <person name="Hastie K.M."/>
            <person name="Cross R.W."/>
            <person name="Harkins S.S."/>
            <person name="Zandonatti M.A."/>
            <person name="Koval A.P."/>
            <person name="Heinrich M.L."/>
            <person name="Rowland M.M."/>
            <person name="Robinson J.E."/>
            <person name="Geisbert T.W."/>
            <person name="Garry R.F."/>
            <person name="Branco L.M."/>
            <person name="Saphire E.O."/>
        </authorList>
    </citation>
    <scope>X-RAY CRYSTALLOGRAPHY (3.50 ANGSTROMS) OF 1-259 AND 260-433</scope>
    <scope>SUBUNIT (GLYCOPROTEIN G1)</scope>
    <scope>SUBUNIT (GLYCOPROTEIN G2)</scope>
    <scope>GLYCOSYLATION AT ASN-79; ASN-89; ASN-99; ASN-109; ASN-119; ASN-224; ASN-373; ASN-390 AND ASN-395</scope>
</reference>
<reference evidence="26" key="18">
    <citation type="journal article" date="2019" name="Front. Microbiol.">
        <title>Crystal Structure of Refolding Fusion Core of Lassa Virus GP2 and Design of Lassa Virus Fusion Inhibitors.</title>
        <authorList>
            <person name="Zhang X."/>
            <person name="Wang C."/>
            <person name="Chen B."/>
            <person name="Wang Q."/>
            <person name="Xu W."/>
            <person name="Ye S."/>
            <person name="Jiang S."/>
            <person name="Zhu Y."/>
            <person name="Zhang R."/>
        </authorList>
    </citation>
    <scope>X-RAY CRYSTALLOGRAPHY (3.39 ANGSTROMS) OF 306-432</scope>
    <scope>SUBUNIT (GLYCOPROTEIN G1)</scope>
    <scope>SUBUNIT (GLYCOPROTEIN G2)</scope>
    <scope>DOMAIN (GLYCOPROTEIN G2)</scope>
</reference>
<reference evidence="24" key="19">
    <citation type="journal article" date="2019" name="J. Mol. Biol.">
        <title>Variations in Core Packing of GP2 from Old World Mammarenaviruses in their Post-Fusion Conformations Affect Membrane-Fusion Efficiencies.</title>
        <authorList>
            <person name="Shulman A."/>
            <person name="Katz M."/>
            <person name="Cohen-Dvashi H."/>
            <person name="Greenblatt H.M."/>
            <person name="Levy Y."/>
            <person name="Diskin R."/>
        </authorList>
    </citation>
    <scope>X-RAY CRYSTALLOGRAPHY (2.56 ANGSTROMS) OF 306-419</scope>
    <scope>FUNCTION (GLYCOPROTEIN G2)</scope>
    <scope>SUBUNIT (GLYCOPROTEIN G2)</scope>
    <scope>MUTAGENESIS OF PHE-316</scope>
    <scope>DISULFIDE BOND</scope>
    <scope>GLYCOSYLATION AT ASN-395</scope>
</reference>
<reference evidence="29 30" key="20">
    <citation type="journal article" date="2022" name="Nature">
        <title>Structure and receptor recognition by the Lassa virus spike complex.</title>
        <authorList>
            <person name="Katz M."/>
            <person name="Weinstein J."/>
            <person name="Eilon-Ashkenazy M."/>
            <person name="Gehring K."/>
            <person name="Cohen-Dvashi H."/>
            <person name="Elad N."/>
            <person name="Fleishman S.J."/>
            <person name="Diskin R."/>
        </authorList>
    </citation>
    <scope>STRUCTURE BY ELECTRON MICROSCOPY (3.30 ANGSTROMS)</scope>
    <scope>FUNCTION (STABLE SIGNAL PEPTIDE)</scope>
    <scope>SUBUNIT (STABLE SIGNAL PEPTIDE)</scope>
    <scope>FUNCTION (GLYCOPROTEIN G1)</scope>
    <scope>SUBUNIT (GLYCOPROTEIN G1)</scope>
    <scope>FUNCTION (GLYCOPROTEIN G2)</scope>
    <scope>SUBUNIT (GLYCOPROTEIN G2)</scope>
    <scope>DOMAIN (STABLE SIGNAL PEPTIDE)</scope>
    <scope>GLYCOSYLATION AT ASN-99; ASN-109; ASN-365 AND ASN-373</scope>
    <scope>TOPOLOGY (GLYCOPROTEIN G1)</scope>
    <scope>TOPOLOGY (GLYCOPROTEIN G2)</scope>
    <scope>TOPOLOGY (STABLE SIGNAL PEPTIDE)</scope>
</reference>
<organismHost>
    <name type="scientific">Homo sapiens</name>
    <name type="common">Human</name>
    <dbReference type="NCBI Taxonomy" id="9606"/>
</organismHost>
<organismHost>
    <name type="scientific">Mastomys natalensis</name>
    <name type="common">African soft-furred rat</name>
    <name type="synonym">Praomys natalensis</name>
    <dbReference type="NCBI Taxonomy" id="10112"/>
</organismHost>
<organism>
    <name type="scientific">Lassa virus (strain Mouse/Sierra Leone/Josiah/1976)</name>
    <name type="common">LASV</name>
    <dbReference type="NCBI Taxonomy" id="11622"/>
    <lineage>
        <taxon>Viruses</taxon>
        <taxon>Riboviria</taxon>
        <taxon>Orthornavirae</taxon>
        <taxon>Negarnaviricota</taxon>
        <taxon>Polyploviricotina</taxon>
        <taxon>Ellioviricetes</taxon>
        <taxon>Bunyavirales</taxon>
        <taxon>Arenaviridae</taxon>
        <taxon>Mammarenavirus</taxon>
        <taxon>Mammarenavirus lassaense</taxon>
    </lineage>
</organism>
<proteinExistence type="evidence at protein level"/>
<sequence>MGQIVTFFQEVPHVIEEVMNIVLIALSVLAVLKGLYNFATCGLVGLVTFLLLCGRSCTTSLYKGVYELQTLELNMETLNMTMPLSCTKNNSHHYIMVGNETGLELTLTNTSIINHKFCNLSDAHKKNLYDHALMSIISTFHLSIPNFNQYEAMSCDFNGGKISVQYNLSHSYAGDAANHCGTVANGVLQTFMRMAWGGSYIALDSGRGNWDCIMTSYQYLIIQNTTWEDHCQFSRPSPIGYLGLLSQRTRDIYISRRLLGTFTWTLSDSEGKDTPGGYCLTRWMLIEAELKCFGNTAVAKCNEKHDEEFCDMLRLFDFNKQAIQRLKAEAQMSIQLINKAVNALINDQLIMKNHLRDIMGIPYCNYSKYWYLNHTTTGRTSLPKCWLVSNGSYLNETHFSDDIEQQADNMITEMLQKEYMERQGKTPLGLVDLFVFSTSFYLISIFLHLVKIPTHRHIVGKSCPKPHRLNHMGICSCGLYKQPGVPVKWKR</sequence>